<protein>
    <recommendedName>
        <fullName>Cytotoxin 1</fullName>
    </recommendedName>
    <alternativeName>
        <fullName evidence="7">CTX M1</fullName>
    </alternativeName>
    <alternativeName>
        <fullName>Cardiotoxin IIB</fullName>
        <shortName>CTX-IIB</shortName>
    </alternativeName>
    <alternativeName>
        <fullName>Cytotoxin V(II)1</fullName>
    </alternativeName>
</protein>
<proteinExistence type="evidence at protein level"/>
<evidence type="ECO:0000250" key="1">
    <source>
        <dbReference type="UniProtKB" id="P60301"/>
    </source>
</evidence>
<evidence type="ECO:0000250" key="2">
    <source>
        <dbReference type="UniProtKB" id="P60304"/>
    </source>
</evidence>
<evidence type="ECO:0000269" key="3">
    <source>
    </source>
</evidence>
<evidence type="ECO:0000269" key="4">
    <source>
    </source>
</evidence>
<evidence type="ECO:0000269" key="5">
    <source>
    </source>
</evidence>
<evidence type="ECO:0000269" key="6">
    <source ref="1"/>
</evidence>
<evidence type="ECO:0000303" key="7">
    <source>
    </source>
</evidence>
<evidence type="ECO:0000305" key="8"/>
<evidence type="ECO:0000305" key="9">
    <source>
    </source>
</evidence>
<evidence type="ECO:0000312" key="10">
    <source>
        <dbReference type="PDB" id="2CCX"/>
    </source>
</evidence>
<evidence type="ECO:0007829" key="11">
    <source>
        <dbReference type="PDB" id="2CCX"/>
    </source>
</evidence>
<feature type="chain" id="PRO_0000093505" description="Cytotoxin 1" evidence="6">
    <location>
        <begin position="1"/>
        <end position="60"/>
    </location>
</feature>
<feature type="disulfide bond" evidence="3 5 10">
    <location>
        <begin position="3"/>
        <end position="21"/>
    </location>
</feature>
<feature type="disulfide bond" evidence="3 5 10">
    <location>
        <begin position="14"/>
        <end position="38"/>
    </location>
</feature>
<feature type="disulfide bond" evidence="3 5 10">
    <location>
        <begin position="42"/>
        <end position="53"/>
    </location>
</feature>
<feature type="disulfide bond" evidence="3 5 10">
    <location>
        <begin position="54"/>
        <end position="59"/>
    </location>
</feature>
<feature type="strand" evidence="11">
    <location>
        <begin position="6"/>
        <end position="8"/>
    </location>
</feature>
<feature type="strand" evidence="11">
    <location>
        <begin position="21"/>
        <end position="28"/>
    </location>
</feature>
<feature type="strand" evidence="11">
    <location>
        <begin position="35"/>
        <end position="37"/>
    </location>
</feature>
<feature type="strand" evidence="11">
    <location>
        <begin position="47"/>
        <end position="54"/>
    </location>
</feature>
<reference key="1">
    <citation type="journal article" date="1974" name="Biochim. Biophys. Acta">
        <title>Snake venom toxins. The amino acid sequences of three cytotoxin homologues from Naja mossambica mossambica venom.</title>
        <authorList>
            <person name="Louw A.I."/>
        </authorList>
    </citation>
    <scope>PROTEIN SEQUENCE</scope>
    <scope>SUBCELLULAR LOCATION</scope>
    <source>
        <tissue>Venom</tissue>
    </source>
</reference>
<reference key="2">
    <citation type="journal article" date="1994" name="J. Biol. Chem.">
        <title>Two distinct types of cardiotoxin as revealed by the structure and activity relationship of their interaction with zwitterionic phospholipid dispersions.</title>
        <authorList>
            <person name="Chien K.-Y."/>
            <person name="Chiang C.-M."/>
            <person name="Hseu Y.-C."/>
            <person name="Vyas A.A."/>
            <person name="Rule G.S."/>
            <person name="Wu W.-G."/>
        </authorList>
    </citation>
    <scope>FUNCTION</scope>
    <scope>APPARTENANCE TO P-TYPE CYTOTOXIN GROUP</scope>
</reference>
<reference key="3">
    <citation type="journal article" date="1987" name="Eur. J. Biochem.">
        <title>Sequence-specific 1H-NMR assignments and determination of the secondary structure in aqueous solution of the cardiotoxins CTXIIa and CTXIIb from Naja mossambica mossambica.</title>
        <authorList>
            <person name="Otting G."/>
            <person name="Steinmetz W.E."/>
            <person name="Bougis P.E."/>
            <person name="Rochat H."/>
            <person name="Wuethrich K."/>
        </authorList>
    </citation>
    <scope>STRUCTURE BY NMR</scope>
    <scope>DISULFIDE BONDS</scope>
</reference>
<reference key="4">
    <citation type="journal article" date="1993" name="Eur. J. Biochem.">
        <title>Determination of the nuclear-magnetic-resonance solution structure of cardiotoxin CTX IIb from Naja mossambica mossambica.</title>
        <authorList>
            <person name="O'Connell J.F."/>
            <person name="Bougis P.E."/>
            <person name="Wuethrich K."/>
        </authorList>
    </citation>
    <scope>STRUCTURE BY NMR</scope>
    <scope>DISULFIDE BONDS</scope>
</reference>
<organism>
    <name type="scientific">Naja mossambica</name>
    <name type="common">Mozambique spitting cobra</name>
    <dbReference type="NCBI Taxonomy" id="8644"/>
    <lineage>
        <taxon>Eukaryota</taxon>
        <taxon>Metazoa</taxon>
        <taxon>Chordata</taxon>
        <taxon>Craniata</taxon>
        <taxon>Vertebrata</taxon>
        <taxon>Euteleostomi</taxon>
        <taxon>Lepidosauria</taxon>
        <taxon>Squamata</taxon>
        <taxon>Bifurcata</taxon>
        <taxon>Unidentata</taxon>
        <taxon>Episquamata</taxon>
        <taxon>Toxicofera</taxon>
        <taxon>Serpentes</taxon>
        <taxon>Colubroidea</taxon>
        <taxon>Elapidae</taxon>
        <taxon>Elapinae</taxon>
        <taxon>Naja</taxon>
    </lineage>
</organism>
<comment type="function">
    <text evidence="1 2 4">Shows cytolytic activity on many different cells by forming pore in lipid membranes. In vivo, increases heart rate or kills the animal by cardiac arrest. In addition, it binds to heparin with high affinity, interacts with Kv channel-interacting protein 1 (KCNIP1) in a calcium-independent manner, and binds to integrin alpha-V/beta-3 (ITGAV/ITGB3) with moderate affinity.</text>
</comment>
<comment type="subunit">
    <text evidence="1">Monomer in solution; Homodimer and oligomer in the presence of negatively charged lipids forming a pore with a size ranging between 20 and 30 Angstroms.</text>
</comment>
<comment type="subcellular location">
    <subcellularLocation>
        <location evidence="6">Secreted</location>
    </subcellularLocation>
    <subcellularLocation>
        <location evidence="1">Target cell membrane</location>
    </subcellularLocation>
</comment>
<comment type="tissue specificity">
    <text evidence="8">Expressed by the venom gland.</text>
</comment>
<comment type="toxic dose">
    <text>LD(50) is 0.83 mg/kg by intravenous injection.</text>
</comment>
<comment type="miscellaneous">
    <text evidence="9">Is classified as a P-type cytotoxin, since a proline residue stands at position 30 (Pro-31 in standard classification).</text>
</comment>
<comment type="similarity">
    <text evidence="8">Belongs to the three-finger toxin family. Short-chain subfamily. Type IA cytotoxin sub-subfamily.</text>
</comment>
<name>3SA1_NAJMO</name>
<sequence>LKCNQLIPPFWKTCPKGKNLCYKMTMRAAPMVPVKRGCIDVCPKSSLLIKYMCCNTNKCN</sequence>
<keyword id="KW-0002">3D-structure</keyword>
<keyword id="KW-0123">Cardiotoxin</keyword>
<keyword id="KW-0204">Cytolysis</keyword>
<keyword id="KW-0903">Direct protein sequencing</keyword>
<keyword id="KW-1015">Disulfide bond</keyword>
<keyword id="KW-0472">Membrane</keyword>
<keyword id="KW-0964">Secreted</keyword>
<keyword id="KW-1052">Target cell membrane</keyword>
<keyword id="KW-1053">Target membrane</keyword>
<keyword id="KW-0800">Toxin</keyword>
<dbReference type="PIR" id="A38050">
    <property type="entry name" value="H3NJ1M"/>
</dbReference>
<dbReference type="PDB" id="2CCX">
    <property type="method" value="NMR"/>
    <property type="chains" value="A=1-60"/>
</dbReference>
<dbReference type="PDBsum" id="2CCX"/>
<dbReference type="SMR" id="P01467"/>
<dbReference type="EvolutionaryTrace" id="P01467"/>
<dbReference type="GO" id="GO:0005576">
    <property type="term" value="C:extracellular region"/>
    <property type="evidence" value="ECO:0007669"/>
    <property type="project" value="UniProtKB-SubCell"/>
</dbReference>
<dbReference type="GO" id="GO:0016020">
    <property type="term" value="C:membrane"/>
    <property type="evidence" value="ECO:0007669"/>
    <property type="project" value="UniProtKB-KW"/>
</dbReference>
<dbReference type="GO" id="GO:0044218">
    <property type="term" value="C:other organism cell membrane"/>
    <property type="evidence" value="ECO:0007669"/>
    <property type="project" value="UniProtKB-KW"/>
</dbReference>
<dbReference type="GO" id="GO:0090729">
    <property type="term" value="F:toxin activity"/>
    <property type="evidence" value="ECO:0007669"/>
    <property type="project" value="UniProtKB-KW"/>
</dbReference>
<dbReference type="GO" id="GO:0031640">
    <property type="term" value="P:killing of cells of another organism"/>
    <property type="evidence" value="ECO:0007669"/>
    <property type="project" value="UniProtKB-KW"/>
</dbReference>
<dbReference type="CDD" id="cd00206">
    <property type="entry name" value="TFP_snake_toxin"/>
    <property type="match status" value="1"/>
</dbReference>
<dbReference type="FunFam" id="2.10.60.10:FF:000024">
    <property type="entry name" value="Cytotoxin 1"/>
    <property type="match status" value="1"/>
</dbReference>
<dbReference type="Gene3D" id="2.10.60.10">
    <property type="entry name" value="CD59"/>
    <property type="match status" value="1"/>
</dbReference>
<dbReference type="InterPro" id="IPR003572">
    <property type="entry name" value="Cytotoxin_Cobra"/>
</dbReference>
<dbReference type="InterPro" id="IPR003571">
    <property type="entry name" value="Snake_3FTx"/>
</dbReference>
<dbReference type="InterPro" id="IPR045860">
    <property type="entry name" value="Snake_toxin-like_sf"/>
</dbReference>
<dbReference type="InterPro" id="IPR018354">
    <property type="entry name" value="Snake_toxin_con_site"/>
</dbReference>
<dbReference type="InterPro" id="IPR054131">
    <property type="entry name" value="Toxin_cobra-type"/>
</dbReference>
<dbReference type="Pfam" id="PF21947">
    <property type="entry name" value="Toxin_cobra-type"/>
    <property type="match status" value="1"/>
</dbReference>
<dbReference type="PRINTS" id="PR00282">
    <property type="entry name" value="CYTOTOXIN"/>
</dbReference>
<dbReference type="SUPFAM" id="SSF57302">
    <property type="entry name" value="Snake toxin-like"/>
    <property type="match status" value="1"/>
</dbReference>
<dbReference type="PROSITE" id="PS00272">
    <property type="entry name" value="SNAKE_TOXIN"/>
    <property type="match status" value="1"/>
</dbReference>
<accession>P01467</accession>